<proteinExistence type="inferred from homology"/>
<reference key="1">
    <citation type="journal article" date="2010" name="PLoS ONE">
        <title>Derivation of Escherichia coli O157:H7 from its O55:H7 precursor.</title>
        <authorList>
            <person name="Zhou Z."/>
            <person name="Li X."/>
            <person name="Liu B."/>
            <person name="Beutin L."/>
            <person name="Xu J."/>
            <person name="Ren Y."/>
            <person name="Feng L."/>
            <person name="Lan R."/>
            <person name="Reeves P.R."/>
            <person name="Wang L."/>
        </authorList>
    </citation>
    <scope>NUCLEOTIDE SEQUENCE [LARGE SCALE GENOMIC DNA]</scope>
    <source>
        <strain>CB9615 / EPEC</strain>
    </source>
</reference>
<name>RUTC_ECOCB</name>
<comment type="function">
    <text evidence="1">Involved in pyrimidine catabolism. Catalyzes the deamination of 3-aminoacrylate to malonic semialdehyde, a reaction that can also occur spontaneously. RutC may facilitate the reaction and modulate the metabolic fitness, rather than catalyzing essential functions.</text>
</comment>
<comment type="catalytic activity">
    <reaction evidence="1">
        <text>(Z)-3-aminoacrylate + H2O + H(+) = 3-oxopropanoate + NH4(+)</text>
        <dbReference type="Rhea" id="RHEA:34947"/>
        <dbReference type="ChEBI" id="CHEBI:15377"/>
        <dbReference type="ChEBI" id="CHEBI:15378"/>
        <dbReference type="ChEBI" id="CHEBI:28938"/>
        <dbReference type="ChEBI" id="CHEBI:33190"/>
        <dbReference type="ChEBI" id="CHEBI:59894"/>
    </reaction>
</comment>
<comment type="subunit">
    <text evidence="1">Homotrimer.</text>
</comment>
<comment type="similarity">
    <text evidence="1">Belongs to the RutC family.</text>
</comment>
<protein>
    <recommendedName>
        <fullName evidence="1">3-aminoacrylate deaminase RutC</fullName>
        <shortName evidence="1">3-AA deaminase</shortName>
        <ecNumber evidence="1">3.5.-.-</ecNumber>
    </recommendedName>
</protein>
<keyword id="KW-0378">Hydrolase</keyword>
<dbReference type="EC" id="3.5.-.-" evidence="1"/>
<dbReference type="EMBL" id="CP001846">
    <property type="protein sequence ID" value="ADD55841.1"/>
    <property type="molecule type" value="Genomic_DNA"/>
</dbReference>
<dbReference type="RefSeq" id="WP_001126784.1">
    <property type="nucleotide sequence ID" value="NC_013941.1"/>
</dbReference>
<dbReference type="SMR" id="D3QPK3"/>
<dbReference type="KEGG" id="eok:G2583_1243"/>
<dbReference type="HOGENOM" id="CLU_100715_7_3_6"/>
<dbReference type="GO" id="GO:0005829">
    <property type="term" value="C:cytosol"/>
    <property type="evidence" value="ECO:0007669"/>
    <property type="project" value="TreeGrafter"/>
</dbReference>
<dbReference type="GO" id="GO:0019239">
    <property type="term" value="F:deaminase activity"/>
    <property type="evidence" value="ECO:0007669"/>
    <property type="project" value="TreeGrafter"/>
</dbReference>
<dbReference type="GO" id="GO:0019740">
    <property type="term" value="P:nitrogen utilization"/>
    <property type="evidence" value="ECO:0007669"/>
    <property type="project" value="UniProtKB-UniRule"/>
</dbReference>
<dbReference type="GO" id="GO:0006212">
    <property type="term" value="P:uracil catabolic process"/>
    <property type="evidence" value="ECO:0007669"/>
    <property type="project" value="UniProtKB-UniRule"/>
</dbReference>
<dbReference type="CDD" id="cd00448">
    <property type="entry name" value="YjgF_YER057c_UK114_family"/>
    <property type="match status" value="1"/>
</dbReference>
<dbReference type="FunFam" id="3.30.1330.40:FF:000003">
    <property type="entry name" value="Putative aminoacrylate peracid reductase RutC"/>
    <property type="match status" value="1"/>
</dbReference>
<dbReference type="Gene3D" id="3.30.1330.40">
    <property type="entry name" value="RutC-like"/>
    <property type="match status" value="1"/>
</dbReference>
<dbReference type="HAMAP" id="MF_00831">
    <property type="entry name" value="RutC"/>
    <property type="match status" value="1"/>
</dbReference>
<dbReference type="InterPro" id="IPR019897">
    <property type="entry name" value="RidA_CS"/>
</dbReference>
<dbReference type="InterPro" id="IPR019898">
    <property type="entry name" value="RutC"/>
</dbReference>
<dbReference type="InterPro" id="IPR035959">
    <property type="entry name" value="RutC-like_sf"/>
</dbReference>
<dbReference type="InterPro" id="IPR006175">
    <property type="entry name" value="YjgF/YER057c/UK114"/>
</dbReference>
<dbReference type="NCBIfam" id="TIGR03610">
    <property type="entry name" value="RutC"/>
    <property type="match status" value="1"/>
</dbReference>
<dbReference type="PANTHER" id="PTHR11803">
    <property type="entry name" value="2-IMINOBUTANOATE/2-IMINOPROPANOATE DEAMINASE RIDA"/>
    <property type="match status" value="1"/>
</dbReference>
<dbReference type="PANTHER" id="PTHR11803:SF58">
    <property type="entry name" value="PROTEIN HMF1-RELATED"/>
    <property type="match status" value="1"/>
</dbReference>
<dbReference type="Pfam" id="PF01042">
    <property type="entry name" value="Ribonuc_L-PSP"/>
    <property type="match status" value="1"/>
</dbReference>
<dbReference type="SUPFAM" id="SSF55298">
    <property type="entry name" value="YjgF-like"/>
    <property type="match status" value="1"/>
</dbReference>
<dbReference type="PROSITE" id="PS01094">
    <property type="entry name" value="UPF0076"/>
    <property type="match status" value="1"/>
</dbReference>
<evidence type="ECO:0000255" key="1">
    <source>
        <dbReference type="HAMAP-Rule" id="MF_00831"/>
    </source>
</evidence>
<organism>
    <name type="scientific">Escherichia coli O55:H7 (strain CB9615 / EPEC)</name>
    <dbReference type="NCBI Taxonomy" id="701177"/>
    <lineage>
        <taxon>Bacteria</taxon>
        <taxon>Pseudomonadati</taxon>
        <taxon>Pseudomonadota</taxon>
        <taxon>Gammaproteobacteria</taxon>
        <taxon>Enterobacterales</taxon>
        <taxon>Enterobacteriaceae</taxon>
        <taxon>Escherichia</taxon>
    </lineage>
</organism>
<gene>
    <name evidence="1" type="primary">rutC</name>
    <name type="ordered locus">G2583_1243</name>
</gene>
<sequence>MPKSVIIPAGSSAPLAPFVPGTLADGVVYVSGTLAFDQHNNVLFADDPKAQTRHVLETIRKVIETAGGTMADVTFNSIFITDWKNYAAINETYAEFFPGDKPARFCIQCGLVKPDALVEIATIAHIAK</sequence>
<feature type="chain" id="PRO_0000402744" description="3-aminoacrylate deaminase RutC">
    <location>
        <begin position="1"/>
        <end position="128"/>
    </location>
</feature>
<accession>D3QPK3</accession>